<feature type="chain" id="PRO_0000311875" description="Ankyrin repeat and SOCS box protein 18">
    <location>
        <begin position="1"/>
        <end position="466"/>
    </location>
</feature>
<feature type="repeat" description="ANK 1">
    <location>
        <begin position="119"/>
        <end position="148"/>
    </location>
</feature>
<feature type="repeat" description="ANK 2">
    <location>
        <begin position="151"/>
        <end position="180"/>
    </location>
</feature>
<feature type="repeat" description="ANK 3">
    <location>
        <begin position="184"/>
        <end position="213"/>
    </location>
</feature>
<feature type="repeat" description="ANK 4">
    <location>
        <begin position="218"/>
        <end position="247"/>
    </location>
</feature>
<feature type="repeat" description="ANK 5">
    <location>
        <begin position="251"/>
        <end position="288"/>
    </location>
</feature>
<feature type="repeat" description="ANK 6">
    <location>
        <begin position="292"/>
        <end position="321"/>
    </location>
</feature>
<feature type="domain" description="SOCS box" evidence="2">
    <location>
        <begin position="405"/>
        <end position="463"/>
    </location>
</feature>
<feature type="splice variant" id="VSP_029621" description="In isoform 2." evidence="3">
    <original>MSNSDYLPDYPLNSDLVKRLKSALDAKDEERVRDLICTEITPVDAVIELANDDWMKDPSAQLPTGMLL</original>
    <variation>MERQPGPVRGKLQIFQKTEKDPQARAGSPVQEYHTALVA</variation>
    <location>
        <begin position="1"/>
        <end position="68"/>
    </location>
</feature>
<feature type="sequence variant" id="VAR_048289" description="In dbSNP:rs6756597.">
    <original>A</original>
    <variation>T</variation>
    <location>
        <position position="104"/>
    </location>
</feature>
<feature type="sequence variant" id="VAR_037331" description="In dbSNP:rs7588748.">
    <original>A</original>
    <variation>P</variation>
    <location>
        <position position="127"/>
    </location>
</feature>
<feature type="sequence variant" id="VAR_059128" description="In dbSNP:rs6431437.">
    <original>G</original>
    <variation>S</variation>
    <location>
        <position position="261"/>
    </location>
</feature>
<feature type="sequence variant" id="VAR_048290" description="In dbSNP:rs10177957.">
    <original>H</original>
    <variation>N</variation>
    <location>
        <position position="407"/>
    </location>
</feature>
<sequence length="466" mass="50803">MSNSDYLPDYPLNSDLVKRLKSALDAKDEERVRDLICTEITPVDAVIELANDDWMKDPSAQLPTGMLLGDLDHLKPLMDQFFQDANVVFEINKDEMEWQVKSPATFGLSGLWTLEYKRELTTPLCIAAAHGHTACVRHLLGRGADPDASPGGRGALHEACLGGHTACVRLLLQHRADPDLLSAEGLAPLHLCRTAASLGCAQALLEHGASVQRVGGTGRDTPLHVAAQRGLDEHARLYLGRGAHVDARNGRGETALSAACGAARRPDEHGRCLRLCALLLRRGAEADARDEDERSPLHKACGHASHSLARLLLRHGADAGALDYGGASPLGRVLQTASCALQASPQRTVQALLNHGSPTVWPDAFPKVLKTCASVPAVIEVLFNSYPQLCLSESWKEVIPEEVFQMHKPFYQSLFALALTPRCLQHLCRCALRRLFGKRCFDLIPLLPLPKPLQNYLLLEPQGVLH</sequence>
<reference key="1">
    <citation type="journal article" date="2004" name="Nat. Genet.">
        <title>Complete sequencing and characterization of 21,243 full-length human cDNAs.</title>
        <authorList>
            <person name="Ota T."/>
            <person name="Suzuki Y."/>
            <person name="Nishikawa T."/>
            <person name="Otsuki T."/>
            <person name="Sugiyama T."/>
            <person name="Irie R."/>
            <person name="Wakamatsu A."/>
            <person name="Hayashi K."/>
            <person name="Sato H."/>
            <person name="Nagai K."/>
            <person name="Kimura K."/>
            <person name="Makita H."/>
            <person name="Sekine M."/>
            <person name="Obayashi M."/>
            <person name="Nishi T."/>
            <person name="Shibahara T."/>
            <person name="Tanaka T."/>
            <person name="Ishii S."/>
            <person name="Yamamoto J."/>
            <person name="Saito K."/>
            <person name="Kawai Y."/>
            <person name="Isono Y."/>
            <person name="Nakamura Y."/>
            <person name="Nagahari K."/>
            <person name="Murakami K."/>
            <person name="Yasuda T."/>
            <person name="Iwayanagi T."/>
            <person name="Wagatsuma M."/>
            <person name="Shiratori A."/>
            <person name="Sudo H."/>
            <person name="Hosoiri T."/>
            <person name="Kaku Y."/>
            <person name="Kodaira H."/>
            <person name="Kondo H."/>
            <person name="Sugawara M."/>
            <person name="Takahashi M."/>
            <person name="Kanda K."/>
            <person name="Yokoi T."/>
            <person name="Furuya T."/>
            <person name="Kikkawa E."/>
            <person name="Omura Y."/>
            <person name="Abe K."/>
            <person name="Kamihara K."/>
            <person name="Katsuta N."/>
            <person name="Sato K."/>
            <person name="Tanikawa M."/>
            <person name="Yamazaki M."/>
            <person name="Ninomiya K."/>
            <person name="Ishibashi T."/>
            <person name="Yamashita H."/>
            <person name="Murakawa K."/>
            <person name="Fujimori K."/>
            <person name="Tanai H."/>
            <person name="Kimata M."/>
            <person name="Watanabe M."/>
            <person name="Hiraoka S."/>
            <person name="Chiba Y."/>
            <person name="Ishida S."/>
            <person name="Ono Y."/>
            <person name="Takiguchi S."/>
            <person name="Watanabe S."/>
            <person name="Yosida M."/>
            <person name="Hotuta T."/>
            <person name="Kusano J."/>
            <person name="Kanehori K."/>
            <person name="Takahashi-Fujii A."/>
            <person name="Hara H."/>
            <person name="Tanase T.-O."/>
            <person name="Nomura Y."/>
            <person name="Togiya S."/>
            <person name="Komai F."/>
            <person name="Hara R."/>
            <person name="Takeuchi K."/>
            <person name="Arita M."/>
            <person name="Imose N."/>
            <person name="Musashino K."/>
            <person name="Yuuki H."/>
            <person name="Oshima A."/>
            <person name="Sasaki N."/>
            <person name="Aotsuka S."/>
            <person name="Yoshikawa Y."/>
            <person name="Matsunawa H."/>
            <person name="Ichihara T."/>
            <person name="Shiohata N."/>
            <person name="Sano S."/>
            <person name="Moriya S."/>
            <person name="Momiyama H."/>
            <person name="Satoh N."/>
            <person name="Takami S."/>
            <person name="Terashima Y."/>
            <person name="Suzuki O."/>
            <person name="Nakagawa S."/>
            <person name="Senoh A."/>
            <person name="Mizoguchi H."/>
            <person name="Goto Y."/>
            <person name="Shimizu F."/>
            <person name="Wakebe H."/>
            <person name="Hishigaki H."/>
            <person name="Watanabe T."/>
            <person name="Sugiyama A."/>
            <person name="Takemoto M."/>
            <person name="Kawakami B."/>
            <person name="Yamazaki M."/>
            <person name="Watanabe K."/>
            <person name="Kumagai A."/>
            <person name="Itakura S."/>
            <person name="Fukuzumi Y."/>
            <person name="Fujimori Y."/>
            <person name="Komiyama M."/>
            <person name="Tashiro H."/>
            <person name="Tanigami A."/>
            <person name="Fujiwara T."/>
            <person name="Ono T."/>
            <person name="Yamada K."/>
            <person name="Fujii Y."/>
            <person name="Ozaki K."/>
            <person name="Hirao M."/>
            <person name="Ohmori Y."/>
            <person name="Kawabata A."/>
            <person name="Hikiji T."/>
            <person name="Kobatake N."/>
            <person name="Inagaki H."/>
            <person name="Ikema Y."/>
            <person name="Okamoto S."/>
            <person name="Okitani R."/>
            <person name="Kawakami T."/>
            <person name="Noguchi S."/>
            <person name="Itoh T."/>
            <person name="Shigeta K."/>
            <person name="Senba T."/>
            <person name="Matsumura K."/>
            <person name="Nakajima Y."/>
            <person name="Mizuno T."/>
            <person name="Morinaga M."/>
            <person name="Sasaki M."/>
            <person name="Togashi T."/>
            <person name="Oyama M."/>
            <person name="Hata H."/>
            <person name="Watanabe M."/>
            <person name="Komatsu T."/>
            <person name="Mizushima-Sugano J."/>
            <person name="Satoh T."/>
            <person name="Shirai Y."/>
            <person name="Takahashi Y."/>
            <person name="Nakagawa K."/>
            <person name="Okumura K."/>
            <person name="Nagase T."/>
            <person name="Nomura N."/>
            <person name="Kikuchi H."/>
            <person name="Masuho Y."/>
            <person name="Yamashita R."/>
            <person name="Nakai K."/>
            <person name="Yada T."/>
            <person name="Nakamura Y."/>
            <person name="Ohara O."/>
            <person name="Isogai T."/>
            <person name="Sugano S."/>
        </authorList>
    </citation>
    <scope>NUCLEOTIDE SEQUENCE [LARGE SCALE MRNA] (ISOFORM 2)</scope>
    <source>
        <tissue>Tongue</tissue>
    </source>
</reference>
<reference key="2">
    <citation type="journal article" date="2005" name="Nature">
        <title>Generation and annotation of the DNA sequences of human chromosomes 2 and 4.</title>
        <authorList>
            <person name="Hillier L.W."/>
            <person name="Graves T.A."/>
            <person name="Fulton R.S."/>
            <person name="Fulton L.A."/>
            <person name="Pepin K.H."/>
            <person name="Minx P."/>
            <person name="Wagner-McPherson C."/>
            <person name="Layman D."/>
            <person name="Wylie K."/>
            <person name="Sekhon M."/>
            <person name="Becker M.C."/>
            <person name="Fewell G.A."/>
            <person name="Delehaunty K.D."/>
            <person name="Miner T.L."/>
            <person name="Nash W.E."/>
            <person name="Kremitzki C."/>
            <person name="Oddy L."/>
            <person name="Du H."/>
            <person name="Sun H."/>
            <person name="Bradshaw-Cordum H."/>
            <person name="Ali J."/>
            <person name="Carter J."/>
            <person name="Cordes M."/>
            <person name="Harris A."/>
            <person name="Isak A."/>
            <person name="van Brunt A."/>
            <person name="Nguyen C."/>
            <person name="Du F."/>
            <person name="Courtney L."/>
            <person name="Kalicki J."/>
            <person name="Ozersky P."/>
            <person name="Abbott S."/>
            <person name="Armstrong J."/>
            <person name="Belter E.A."/>
            <person name="Caruso L."/>
            <person name="Cedroni M."/>
            <person name="Cotton M."/>
            <person name="Davidson T."/>
            <person name="Desai A."/>
            <person name="Elliott G."/>
            <person name="Erb T."/>
            <person name="Fronick C."/>
            <person name="Gaige T."/>
            <person name="Haakenson W."/>
            <person name="Haglund K."/>
            <person name="Holmes A."/>
            <person name="Harkins R."/>
            <person name="Kim K."/>
            <person name="Kruchowski S.S."/>
            <person name="Strong C.M."/>
            <person name="Grewal N."/>
            <person name="Goyea E."/>
            <person name="Hou S."/>
            <person name="Levy A."/>
            <person name="Martinka S."/>
            <person name="Mead K."/>
            <person name="McLellan M.D."/>
            <person name="Meyer R."/>
            <person name="Randall-Maher J."/>
            <person name="Tomlinson C."/>
            <person name="Dauphin-Kohlberg S."/>
            <person name="Kozlowicz-Reilly A."/>
            <person name="Shah N."/>
            <person name="Swearengen-Shahid S."/>
            <person name="Snider J."/>
            <person name="Strong J.T."/>
            <person name="Thompson J."/>
            <person name="Yoakum M."/>
            <person name="Leonard S."/>
            <person name="Pearman C."/>
            <person name="Trani L."/>
            <person name="Radionenko M."/>
            <person name="Waligorski J.E."/>
            <person name="Wang C."/>
            <person name="Rock S.M."/>
            <person name="Tin-Wollam A.-M."/>
            <person name="Maupin R."/>
            <person name="Latreille P."/>
            <person name="Wendl M.C."/>
            <person name="Yang S.-P."/>
            <person name="Pohl C."/>
            <person name="Wallis J.W."/>
            <person name="Spieth J."/>
            <person name="Bieri T.A."/>
            <person name="Berkowicz N."/>
            <person name="Nelson J.O."/>
            <person name="Osborne J."/>
            <person name="Ding L."/>
            <person name="Meyer R."/>
            <person name="Sabo A."/>
            <person name="Shotland Y."/>
            <person name="Sinha P."/>
            <person name="Wohldmann P.E."/>
            <person name="Cook L.L."/>
            <person name="Hickenbotham M.T."/>
            <person name="Eldred J."/>
            <person name="Williams D."/>
            <person name="Jones T.A."/>
            <person name="She X."/>
            <person name="Ciccarelli F.D."/>
            <person name="Izaurralde E."/>
            <person name="Taylor J."/>
            <person name="Schmutz J."/>
            <person name="Myers R.M."/>
            <person name="Cox D.R."/>
            <person name="Huang X."/>
            <person name="McPherson J.D."/>
            <person name="Mardis E.R."/>
            <person name="Clifton S.W."/>
            <person name="Warren W.C."/>
            <person name="Chinwalla A.T."/>
            <person name="Eddy S.R."/>
            <person name="Marra M.A."/>
            <person name="Ovcharenko I."/>
            <person name="Furey T.S."/>
            <person name="Miller W."/>
            <person name="Eichler E.E."/>
            <person name="Bork P."/>
            <person name="Suyama M."/>
            <person name="Torrents D."/>
            <person name="Waterston R.H."/>
            <person name="Wilson R.K."/>
        </authorList>
    </citation>
    <scope>NUCLEOTIDE SEQUENCE [LARGE SCALE GENOMIC DNA]</scope>
</reference>
<keyword id="KW-0025">Alternative splicing</keyword>
<keyword id="KW-0040">ANK repeat</keyword>
<keyword id="KW-1185">Reference proteome</keyword>
<keyword id="KW-0677">Repeat</keyword>
<keyword id="KW-0833">Ubl conjugation pathway</keyword>
<comment type="function">
    <text evidence="1">May be a substrate-recognition component of a SCF-like ECS (Elongin-Cullin-SOCS-box protein) E3 ubiquitin-protein ligase complex which mediates the ubiquitination and subsequent proteasomal degradation of target proteins.</text>
</comment>
<comment type="pathway">
    <text>Protein modification; protein ubiquitination.</text>
</comment>
<comment type="alternative products">
    <event type="alternative splicing"/>
    <isoform>
        <id>Q6ZVZ8-1</id>
        <name>1</name>
        <sequence type="displayed"/>
    </isoform>
    <isoform>
        <id>Q6ZVZ8-2</id>
        <name>2</name>
        <sequence type="described" ref="VSP_029621"/>
    </isoform>
</comment>
<comment type="domain">
    <text evidence="1">The SOCS box domain mediates the interaction with the Elongin BC complex, an adapter module in different E3 ubiquitin-protein ligase complexes.</text>
</comment>
<comment type="similarity">
    <text evidence="4">Belongs to the ankyrin SOCS box (ASB) family.</text>
</comment>
<comment type="sequence caution" evidence="4">
    <conflict type="miscellaneous discrepancy">
        <sequence resource="EMBL-CDS" id="BAC85710"/>
    </conflict>
    <text>Unlikely isoform. Aberrant splice sites.</text>
</comment>
<proteinExistence type="evidence at transcript level"/>
<evidence type="ECO:0000250" key="1"/>
<evidence type="ECO:0000255" key="2">
    <source>
        <dbReference type="PROSITE-ProRule" id="PRU00194"/>
    </source>
</evidence>
<evidence type="ECO:0000303" key="3">
    <source>
    </source>
</evidence>
<evidence type="ECO:0000305" key="4"/>
<protein>
    <recommendedName>
        <fullName>Ankyrin repeat and SOCS box protein 18</fullName>
        <shortName>ASB-18</shortName>
    </recommendedName>
</protein>
<dbReference type="EMBL" id="AK123854">
    <property type="protein sequence ID" value="BAC85710.1"/>
    <property type="status" value="ALT_SEQ"/>
    <property type="molecule type" value="mRNA"/>
</dbReference>
<dbReference type="EMBL" id="AC019068">
    <property type="status" value="NOT_ANNOTATED_CDS"/>
    <property type="molecule type" value="Genomic_DNA"/>
</dbReference>
<dbReference type="EMBL" id="AC079135">
    <property type="status" value="NOT_ANNOTATED_CDS"/>
    <property type="molecule type" value="Genomic_DNA"/>
</dbReference>
<dbReference type="CCDS" id="CCDS46548.1">
    <molecule id="Q6ZVZ8-1"/>
</dbReference>
<dbReference type="RefSeq" id="NP_997721.2">
    <molecule id="Q6ZVZ8-1"/>
    <property type="nucleotide sequence ID" value="NM_212556.4"/>
</dbReference>
<dbReference type="SMR" id="Q6ZVZ8"/>
<dbReference type="BioGRID" id="134882">
    <property type="interactions" value="26"/>
</dbReference>
<dbReference type="FunCoup" id="Q6ZVZ8">
    <property type="interactions" value="170"/>
</dbReference>
<dbReference type="STRING" id="9606.ENSP00000386532"/>
<dbReference type="iPTMnet" id="Q6ZVZ8"/>
<dbReference type="PhosphoSitePlus" id="Q6ZVZ8"/>
<dbReference type="BioMuta" id="ASB18"/>
<dbReference type="DMDM" id="162416260"/>
<dbReference type="PaxDb" id="9606-ENSP00000386532"/>
<dbReference type="PeptideAtlas" id="Q6ZVZ8"/>
<dbReference type="ProteomicsDB" id="68449">
    <molecule id="Q6ZVZ8-1"/>
</dbReference>
<dbReference type="ProteomicsDB" id="68450">
    <molecule id="Q6ZVZ8-2"/>
</dbReference>
<dbReference type="Antibodypedia" id="63013">
    <property type="antibodies" value="10 antibodies from 6 providers"/>
</dbReference>
<dbReference type="DNASU" id="401036"/>
<dbReference type="Ensembl" id="ENST00000409749.8">
    <molecule id="Q6ZVZ8-1"/>
    <property type="protein sequence ID" value="ENSP00000386532.3"/>
    <property type="gene ID" value="ENSG00000182177.15"/>
</dbReference>
<dbReference type="Ensembl" id="ENST00000645891.1">
    <molecule id="Q6ZVZ8-2"/>
    <property type="protein sequence ID" value="ENSP00000496134.1"/>
    <property type="gene ID" value="ENSG00000182177.15"/>
</dbReference>
<dbReference type="GeneID" id="401036"/>
<dbReference type="KEGG" id="hsa:401036"/>
<dbReference type="MANE-Select" id="ENST00000409749.8">
    <property type="protein sequence ID" value="ENSP00000386532.3"/>
    <property type="RefSeq nucleotide sequence ID" value="NM_212556.4"/>
    <property type="RefSeq protein sequence ID" value="NP_997721.2"/>
</dbReference>
<dbReference type="UCSC" id="uc010znh.2">
    <molecule id="Q6ZVZ8-1"/>
    <property type="organism name" value="human"/>
</dbReference>
<dbReference type="AGR" id="HGNC:19770"/>
<dbReference type="CTD" id="401036"/>
<dbReference type="DisGeNET" id="401036"/>
<dbReference type="GeneCards" id="ASB18"/>
<dbReference type="HGNC" id="HGNC:19770">
    <property type="gene designation" value="ASB18"/>
</dbReference>
<dbReference type="HPA" id="ENSG00000182177">
    <property type="expression patterns" value="Group enriched (heart muscle, skeletal muscle)"/>
</dbReference>
<dbReference type="neXtProt" id="NX_Q6ZVZ8"/>
<dbReference type="OpenTargets" id="ENSG00000182177"/>
<dbReference type="PharmGKB" id="PA134950797"/>
<dbReference type="VEuPathDB" id="HostDB:ENSG00000182177"/>
<dbReference type="eggNOG" id="KOG0504">
    <property type="taxonomic scope" value="Eukaryota"/>
</dbReference>
<dbReference type="GeneTree" id="ENSGT00940000162056"/>
<dbReference type="HOGENOM" id="CLU_035721_2_0_1"/>
<dbReference type="InParanoid" id="Q6ZVZ8"/>
<dbReference type="OMA" id="DARNGCG"/>
<dbReference type="OrthoDB" id="366390at2759"/>
<dbReference type="PAN-GO" id="Q6ZVZ8">
    <property type="GO annotations" value="0 GO annotations based on evolutionary models"/>
</dbReference>
<dbReference type="PhylomeDB" id="Q6ZVZ8"/>
<dbReference type="TreeFam" id="TF323921"/>
<dbReference type="PathwayCommons" id="Q6ZVZ8"/>
<dbReference type="Reactome" id="R-HSA-8951664">
    <property type="pathway name" value="Neddylation"/>
</dbReference>
<dbReference type="Reactome" id="R-HSA-983168">
    <property type="pathway name" value="Antigen processing: Ubiquitination &amp; Proteasome degradation"/>
</dbReference>
<dbReference type="SignaLink" id="Q6ZVZ8"/>
<dbReference type="UniPathway" id="UPA00143"/>
<dbReference type="BioGRID-ORCS" id="401036">
    <property type="hits" value="8 hits in 1185 CRISPR screens"/>
</dbReference>
<dbReference type="ChiTaRS" id="ASB18">
    <property type="organism name" value="human"/>
</dbReference>
<dbReference type="GenomeRNAi" id="401036"/>
<dbReference type="Pharos" id="Q6ZVZ8">
    <property type="development level" value="Tdark"/>
</dbReference>
<dbReference type="PRO" id="PR:Q6ZVZ8"/>
<dbReference type="Proteomes" id="UP000005640">
    <property type="component" value="Chromosome 2"/>
</dbReference>
<dbReference type="RNAct" id="Q6ZVZ8">
    <property type="molecule type" value="protein"/>
</dbReference>
<dbReference type="Bgee" id="ENSG00000182177">
    <property type="expression patterns" value="Expressed in apex of heart and 40 other cell types or tissues"/>
</dbReference>
<dbReference type="ExpressionAtlas" id="Q6ZVZ8">
    <property type="expression patterns" value="baseline and differential"/>
</dbReference>
<dbReference type="GO" id="GO:0005829">
    <property type="term" value="C:cytosol"/>
    <property type="evidence" value="ECO:0000304"/>
    <property type="project" value="Reactome"/>
</dbReference>
<dbReference type="GO" id="GO:0035556">
    <property type="term" value="P:intracellular signal transduction"/>
    <property type="evidence" value="ECO:0007669"/>
    <property type="project" value="InterPro"/>
</dbReference>
<dbReference type="GO" id="GO:0016567">
    <property type="term" value="P:protein ubiquitination"/>
    <property type="evidence" value="ECO:0007669"/>
    <property type="project" value="UniProtKB-UniPathway"/>
</dbReference>
<dbReference type="CDD" id="cd03723">
    <property type="entry name" value="SOCS_ASB4_ASB18"/>
    <property type="match status" value="1"/>
</dbReference>
<dbReference type="FunFam" id="1.10.750.20:FF:000001">
    <property type="entry name" value="Ankyrin repeat and SOCS box containing 1"/>
    <property type="match status" value="1"/>
</dbReference>
<dbReference type="FunFam" id="1.25.40.20:FF:000154">
    <property type="entry name" value="Ankyrin repeat and SOCS box containing 10"/>
    <property type="match status" value="1"/>
</dbReference>
<dbReference type="FunFam" id="1.25.40.20:FF:000228">
    <property type="entry name" value="Ankyrin repeat and SOCS box containing 10"/>
    <property type="match status" value="1"/>
</dbReference>
<dbReference type="Gene3D" id="1.25.40.20">
    <property type="entry name" value="Ankyrin repeat-containing domain"/>
    <property type="match status" value="3"/>
</dbReference>
<dbReference type="Gene3D" id="1.10.750.20">
    <property type="entry name" value="SOCS box"/>
    <property type="match status" value="1"/>
</dbReference>
<dbReference type="InterPro" id="IPR002110">
    <property type="entry name" value="Ankyrin_rpt"/>
</dbReference>
<dbReference type="InterPro" id="IPR036770">
    <property type="entry name" value="Ankyrin_rpt-contain_sf"/>
</dbReference>
<dbReference type="InterPro" id="IPR001496">
    <property type="entry name" value="SOCS_box"/>
</dbReference>
<dbReference type="InterPro" id="IPR036036">
    <property type="entry name" value="SOCS_box-like_dom_sf"/>
</dbReference>
<dbReference type="PANTHER" id="PTHR24198">
    <property type="entry name" value="ANKYRIN REPEAT AND PROTEIN KINASE DOMAIN-CONTAINING PROTEIN"/>
    <property type="match status" value="1"/>
</dbReference>
<dbReference type="PANTHER" id="PTHR24198:SF173">
    <property type="entry name" value="ANKYRIN REPEAT AND SOCS BOX PROTEIN 10-RELATED"/>
    <property type="match status" value="1"/>
</dbReference>
<dbReference type="Pfam" id="PF00023">
    <property type="entry name" value="Ank"/>
    <property type="match status" value="1"/>
</dbReference>
<dbReference type="Pfam" id="PF12796">
    <property type="entry name" value="Ank_2"/>
    <property type="match status" value="2"/>
</dbReference>
<dbReference type="Pfam" id="PF07525">
    <property type="entry name" value="SOCS_box"/>
    <property type="match status" value="1"/>
</dbReference>
<dbReference type="SMART" id="SM00248">
    <property type="entry name" value="ANK"/>
    <property type="match status" value="6"/>
</dbReference>
<dbReference type="SMART" id="SM00969">
    <property type="entry name" value="SOCS_box"/>
    <property type="match status" value="1"/>
</dbReference>
<dbReference type="SUPFAM" id="SSF48403">
    <property type="entry name" value="Ankyrin repeat"/>
    <property type="match status" value="1"/>
</dbReference>
<dbReference type="SUPFAM" id="SSF158235">
    <property type="entry name" value="SOCS box-like"/>
    <property type="match status" value="1"/>
</dbReference>
<dbReference type="PROSITE" id="PS50297">
    <property type="entry name" value="ANK_REP_REGION"/>
    <property type="match status" value="1"/>
</dbReference>
<dbReference type="PROSITE" id="PS50088">
    <property type="entry name" value="ANK_REPEAT"/>
    <property type="match status" value="4"/>
</dbReference>
<dbReference type="PROSITE" id="PS50225">
    <property type="entry name" value="SOCS"/>
    <property type="match status" value="1"/>
</dbReference>
<organism>
    <name type="scientific">Homo sapiens</name>
    <name type="common">Human</name>
    <dbReference type="NCBI Taxonomy" id="9606"/>
    <lineage>
        <taxon>Eukaryota</taxon>
        <taxon>Metazoa</taxon>
        <taxon>Chordata</taxon>
        <taxon>Craniata</taxon>
        <taxon>Vertebrata</taxon>
        <taxon>Euteleostomi</taxon>
        <taxon>Mammalia</taxon>
        <taxon>Eutheria</taxon>
        <taxon>Euarchontoglires</taxon>
        <taxon>Primates</taxon>
        <taxon>Haplorrhini</taxon>
        <taxon>Catarrhini</taxon>
        <taxon>Hominidae</taxon>
        <taxon>Homo</taxon>
    </lineage>
</organism>
<name>ASB18_HUMAN</name>
<accession>Q6ZVZ8</accession>
<accession>B6ZDL7</accession>
<gene>
    <name type="primary">ASB18</name>
</gene>